<proteinExistence type="inferred from homology"/>
<gene>
    <name type="ordered locus">M164_1474</name>
</gene>
<accession>C4KHL2</accession>
<comment type="function">
    <text evidence="1">Transcriptional regulator.</text>
</comment>
<comment type="cofactor">
    <cofactor evidence="1">
        <name>Ni(2+)</name>
        <dbReference type="ChEBI" id="CHEBI:49786"/>
    </cofactor>
    <text evidence="1">Binds 1 nickel ion per subunit.</text>
</comment>
<comment type="similarity">
    <text evidence="1">Belongs to the transcriptional regulatory CopG/NikR family.</text>
</comment>
<evidence type="ECO:0000255" key="1">
    <source>
        <dbReference type="HAMAP-Rule" id="MF_00476"/>
    </source>
</evidence>
<protein>
    <recommendedName>
        <fullName evidence="1">Putative nickel-responsive regulator</fullName>
    </recommendedName>
</protein>
<organism>
    <name type="scientific">Saccharolobus islandicus (strain M.16.4 / Kamchatka #3)</name>
    <name type="common">Sulfolobus islandicus</name>
    <dbReference type="NCBI Taxonomy" id="426118"/>
    <lineage>
        <taxon>Archaea</taxon>
        <taxon>Thermoproteota</taxon>
        <taxon>Thermoprotei</taxon>
        <taxon>Sulfolobales</taxon>
        <taxon>Sulfolobaceae</taxon>
        <taxon>Saccharolobus</taxon>
    </lineage>
</organism>
<reference key="1">
    <citation type="journal article" date="2009" name="Proc. Natl. Acad. Sci. U.S.A.">
        <title>Biogeography of the Sulfolobus islandicus pan-genome.</title>
        <authorList>
            <person name="Reno M.L."/>
            <person name="Held N.L."/>
            <person name="Fields C.J."/>
            <person name="Burke P.V."/>
            <person name="Whitaker R.J."/>
        </authorList>
    </citation>
    <scope>NUCLEOTIDE SEQUENCE [LARGE SCALE GENOMIC DNA]</scope>
    <source>
        <strain>M.16.4 / Kamchatka #3</strain>
    </source>
</reference>
<feature type="chain" id="PRO_1000206382" description="Putative nickel-responsive regulator">
    <location>
        <begin position="1"/>
        <end position="133"/>
    </location>
</feature>
<feature type="binding site" evidence="1">
    <location>
        <position position="74"/>
    </location>
    <ligand>
        <name>Ni(2+)</name>
        <dbReference type="ChEBI" id="CHEBI:49786"/>
    </ligand>
</feature>
<feature type="binding site" evidence="1">
    <location>
        <position position="85"/>
    </location>
    <ligand>
        <name>Ni(2+)</name>
        <dbReference type="ChEBI" id="CHEBI:49786"/>
    </ligand>
</feature>
<feature type="binding site" evidence="1">
    <location>
        <position position="87"/>
    </location>
    <ligand>
        <name>Ni(2+)</name>
        <dbReference type="ChEBI" id="CHEBI:49786"/>
    </ligand>
</feature>
<feature type="binding site" evidence="1">
    <location>
        <position position="93"/>
    </location>
    <ligand>
        <name>Ni(2+)</name>
        <dbReference type="ChEBI" id="CHEBI:49786"/>
    </ligand>
</feature>
<sequence>MSAEKISISLPKELYRELEDFITRKGIPDRSKIFQIALRNYLDENREGTEIIYGIINLVYDHEEASEALTEIQHEYKDNIISTLHLHVNERLCIEAIAVKGEKSKLVELNNRLGQIRGILKARLLISFPYEKT</sequence>
<keyword id="KW-0238">DNA-binding</keyword>
<keyword id="KW-0479">Metal-binding</keyword>
<keyword id="KW-0533">Nickel</keyword>
<keyword id="KW-0804">Transcription</keyword>
<keyword id="KW-0805">Transcription regulation</keyword>
<dbReference type="EMBL" id="CP001402">
    <property type="protein sequence ID" value="ACR42076.1"/>
    <property type="molecule type" value="Genomic_DNA"/>
</dbReference>
<dbReference type="RefSeq" id="WP_012711473.1">
    <property type="nucleotide sequence ID" value="NC_012726.1"/>
</dbReference>
<dbReference type="SMR" id="C4KHL2"/>
<dbReference type="KEGG" id="sid:M164_1474"/>
<dbReference type="HOGENOM" id="CLU_113319_2_1_2"/>
<dbReference type="Proteomes" id="UP000001479">
    <property type="component" value="Chromosome"/>
</dbReference>
<dbReference type="GO" id="GO:0003677">
    <property type="term" value="F:DNA binding"/>
    <property type="evidence" value="ECO:0007669"/>
    <property type="project" value="UniProtKB-KW"/>
</dbReference>
<dbReference type="GO" id="GO:0003700">
    <property type="term" value="F:DNA-binding transcription factor activity"/>
    <property type="evidence" value="ECO:0007669"/>
    <property type="project" value="UniProtKB-UniRule"/>
</dbReference>
<dbReference type="GO" id="GO:0016151">
    <property type="term" value="F:nickel cation binding"/>
    <property type="evidence" value="ECO:0007669"/>
    <property type="project" value="UniProtKB-UniRule"/>
</dbReference>
<dbReference type="GO" id="GO:0010045">
    <property type="term" value="P:response to nickel cation"/>
    <property type="evidence" value="ECO:0007669"/>
    <property type="project" value="InterPro"/>
</dbReference>
<dbReference type="CDD" id="cd22231">
    <property type="entry name" value="RHH_NikR_HicB-like"/>
    <property type="match status" value="1"/>
</dbReference>
<dbReference type="Gene3D" id="3.30.70.1150">
    <property type="entry name" value="ACT-like. Chain A, domain 2"/>
    <property type="match status" value="1"/>
</dbReference>
<dbReference type="Gene3D" id="1.10.1220.10">
    <property type="entry name" value="Met repressor-like"/>
    <property type="match status" value="1"/>
</dbReference>
<dbReference type="HAMAP" id="MF_00476">
    <property type="entry name" value="NikR"/>
    <property type="match status" value="1"/>
</dbReference>
<dbReference type="InterPro" id="IPR027271">
    <property type="entry name" value="Acetolactate_synth/TF_NikR_C"/>
</dbReference>
<dbReference type="InterPro" id="IPR045865">
    <property type="entry name" value="ACT-like_dom_sf"/>
</dbReference>
<dbReference type="InterPro" id="IPR013321">
    <property type="entry name" value="Arc_rbn_hlx_hlx"/>
</dbReference>
<dbReference type="InterPro" id="IPR002145">
    <property type="entry name" value="CopG"/>
</dbReference>
<dbReference type="InterPro" id="IPR050192">
    <property type="entry name" value="CopG/NikR_regulator"/>
</dbReference>
<dbReference type="InterPro" id="IPR022988">
    <property type="entry name" value="Ni_resp_reg_NikR"/>
</dbReference>
<dbReference type="InterPro" id="IPR010985">
    <property type="entry name" value="Ribbon_hlx_hlx"/>
</dbReference>
<dbReference type="InterPro" id="IPR014864">
    <property type="entry name" value="TF_NikR_Ni-bd_C"/>
</dbReference>
<dbReference type="PANTHER" id="PTHR34719">
    <property type="entry name" value="NICKEL-RESPONSIVE REGULATOR"/>
    <property type="match status" value="1"/>
</dbReference>
<dbReference type="PANTHER" id="PTHR34719:SF2">
    <property type="entry name" value="NICKEL-RESPONSIVE REGULATOR"/>
    <property type="match status" value="1"/>
</dbReference>
<dbReference type="Pfam" id="PF08753">
    <property type="entry name" value="NikR_C"/>
    <property type="match status" value="1"/>
</dbReference>
<dbReference type="Pfam" id="PF01402">
    <property type="entry name" value="RHH_1"/>
    <property type="match status" value="1"/>
</dbReference>
<dbReference type="SUPFAM" id="SSF55021">
    <property type="entry name" value="ACT-like"/>
    <property type="match status" value="1"/>
</dbReference>
<dbReference type="SUPFAM" id="SSF47598">
    <property type="entry name" value="Ribbon-helix-helix"/>
    <property type="match status" value="1"/>
</dbReference>
<name>NIKR_SACI6</name>